<feature type="chain" id="PRO_0000374926" description="Ribosomal protein uS12 methylthiotransferase RimO">
    <location>
        <begin position="1"/>
        <end position="454"/>
    </location>
</feature>
<feature type="domain" description="MTTase N-terminal" evidence="1">
    <location>
        <begin position="14"/>
        <end position="125"/>
    </location>
</feature>
<feature type="domain" description="Radical SAM core" evidence="2">
    <location>
        <begin position="149"/>
        <end position="378"/>
    </location>
</feature>
<feature type="domain" description="TRAM" evidence="1">
    <location>
        <begin position="381"/>
        <end position="452"/>
    </location>
</feature>
<feature type="binding site" evidence="1">
    <location>
        <position position="23"/>
    </location>
    <ligand>
        <name>[4Fe-4S] cluster</name>
        <dbReference type="ChEBI" id="CHEBI:49883"/>
        <label>1</label>
    </ligand>
</feature>
<feature type="binding site" evidence="1">
    <location>
        <position position="59"/>
    </location>
    <ligand>
        <name>[4Fe-4S] cluster</name>
        <dbReference type="ChEBI" id="CHEBI:49883"/>
        <label>1</label>
    </ligand>
</feature>
<feature type="binding site" evidence="1">
    <location>
        <position position="88"/>
    </location>
    <ligand>
        <name>[4Fe-4S] cluster</name>
        <dbReference type="ChEBI" id="CHEBI:49883"/>
        <label>1</label>
    </ligand>
</feature>
<feature type="binding site" evidence="1">
    <location>
        <position position="163"/>
    </location>
    <ligand>
        <name>[4Fe-4S] cluster</name>
        <dbReference type="ChEBI" id="CHEBI:49883"/>
        <label>2</label>
        <note>4Fe-4S-S-AdoMet</note>
    </ligand>
</feature>
<feature type="binding site" evidence="1">
    <location>
        <position position="167"/>
    </location>
    <ligand>
        <name>[4Fe-4S] cluster</name>
        <dbReference type="ChEBI" id="CHEBI:49883"/>
        <label>2</label>
        <note>4Fe-4S-S-AdoMet</note>
    </ligand>
</feature>
<feature type="binding site" evidence="1">
    <location>
        <position position="170"/>
    </location>
    <ligand>
        <name>[4Fe-4S] cluster</name>
        <dbReference type="ChEBI" id="CHEBI:49883"/>
        <label>2</label>
        <note>4Fe-4S-S-AdoMet</note>
    </ligand>
</feature>
<reference key="1">
    <citation type="journal article" date="2007" name="PLoS Genet.">
        <title>Patterns and implications of gene gain and loss in the evolution of Prochlorococcus.</title>
        <authorList>
            <person name="Kettler G.C."/>
            <person name="Martiny A.C."/>
            <person name="Huang K."/>
            <person name="Zucker J."/>
            <person name="Coleman M.L."/>
            <person name="Rodrigue S."/>
            <person name="Chen F."/>
            <person name="Lapidus A."/>
            <person name="Ferriera S."/>
            <person name="Johnson J."/>
            <person name="Steglich C."/>
            <person name="Church G.M."/>
            <person name="Richardson P."/>
            <person name="Chisholm S.W."/>
        </authorList>
    </citation>
    <scope>NUCLEOTIDE SEQUENCE [LARGE SCALE GENOMIC DNA]</scope>
    <source>
        <strain>AS9601</strain>
    </source>
</reference>
<comment type="function">
    <text evidence="1">Catalyzes the methylthiolation of an aspartic acid residue of ribosomal protein uS12.</text>
</comment>
<comment type="catalytic activity">
    <reaction evidence="1">
        <text>L-aspartate(89)-[ribosomal protein uS12]-hydrogen + (sulfur carrier)-SH + AH2 + 2 S-adenosyl-L-methionine = 3-methylsulfanyl-L-aspartate(89)-[ribosomal protein uS12]-hydrogen + (sulfur carrier)-H + 5'-deoxyadenosine + L-methionine + A + S-adenosyl-L-homocysteine + 2 H(+)</text>
        <dbReference type="Rhea" id="RHEA:37087"/>
        <dbReference type="Rhea" id="RHEA-COMP:10460"/>
        <dbReference type="Rhea" id="RHEA-COMP:10461"/>
        <dbReference type="Rhea" id="RHEA-COMP:14737"/>
        <dbReference type="Rhea" id="RHEA-COMP:14739"/>
        <dbReference type="ChEBI" id="CHEBI:13193"/>
        <dbReference type="ChEBI" id="CHEBI:15378"/>
        <dbReference type="ChEBI" id="CHEBI:17319"/>
        <dbReference type="ChEBI" id="CHEBI:17499"/>
        <dbReference type="ChEBI" id="CHEBI:29917"/>
        <dbReference type="ChEBI" id="CHEBI:29961"/>
        <dbReference type="ChEBI" id="CHEBI:57844"/>
        <dbReference type="ChEBI" id="CHEBI:57856"/>
        <dbReference type="ChEBI" id="CHEBI:59789"/>
        <dbReference type="ChEBI" id="CHEBI:64428"/>
        <dbReference type="ChEBI" id="CHEBI:73599"/>
        <dbReference type="EC" id="2.8.4.4"/>
    </reaction>
</comment>
<comment type="cofactor">
    <cofactor evidence="1">
        <name>[4Fe-4S] cluster</name>
        <dbReference type="ChEBI" id="CHEBI:49883"/>
    </cofactor>
    <text evidence="1">Binds 2 [4Fe-4S] clusters. One cluster is coordinated with 3 cysteines and an exchangeable S-adenosyl-L-methionine.</text>
</comment>
<comment type="subcellular location">
    <subcellularLocation>
        <location evidence="1">Cytoplasm</location>
    </subcellularLocation>
</comment>
<comment type="similarity">
    <text evidence="1">Belongs to the methylthiotransferase family. RimO subfamily.</text>
</comment>
<keyword id="KW-0004">4Fe-4S</keyword>
<keyword id="KW-0963">Cytoplasm</keyword>
<keyword id="KW-0408">Iron</keyword>
<keyword id="KW-0411">Iron-sulfur</keyword>
<keyword id="KW-0479">Metal-binding</keyword>
<keyword id="KW-0949">S-adenosyl-L-methionine</keyword>
<keyword id="KW-0808">Transferase</keyword>
<proteinExistence type="inferred from homology"/>
<evidence type="ECO:0000255" key="1">
    <source>
        <dbReference type="HAMAP-Rule" id="MF_01865"/>
    </source>
</evidence>
<evidence type="ECO:0000255" key="2">
    <source>
        <dbReference type="PROSITE-ProRule" id="PRU01266"/>
    </source>
</evidence>
<protein>
    <recommendedName>
        <fullName evidence="1">Ribosomal protein uS12 methylthiotransferase RimO</fullName>
        <shortName evidence="1">uS12 MTTase</shortName>
        <shortName evidence="1">uS12 methylthiotransferase</shortName>
        <ecNumber evidence="1">2.8.4.4</ecNumber>
    </recommendedName>
    <alternativeName>
        <fullName evidence="1">Ribosomal protein uS12 (aspartate-C(3))-methylthiotransferase</fullName>
    </alternativeName>
    <alternativeName>
        <fullName evidence="1">Ribosome maturation factor RimO</fullName>
    </alternativeName>
</protein>
<sequence length="454" mass="51522">MKQNSLNVKEKKLSKVAFSHVGCEKNLVDTEHMQGLLDKEGYEVDSNINDANVVVVNTCSFIETAREESIRKILEYTNQGKEVIVAGCMAQHFKDELIREIPEIKGLVGTGDYQKIAKVLDRVEQGEIVNEVSKIPEFIADEEMPRFVDKNKFVAYLRIAEGCNYNCAFCIIPKLRGPQRSRTIESIVSEAKSLAKKGIQEIILISQITTNYGQDIYGKPSLAKLLNELSKVSIPWIRIHYAYPTGLTDEVIRAFKDSKNIVPYFDLPLQHSHPDVLKSMNRPWQASLNESILEKIREEIPSAVLRTSLIVGFPGEKKEHFEHLLQFLDRHKFDHVGVFIFSPEEGTTAFHLPNKVSLEVAEARKDNVISVQQNISKDKNQTYVGSKMKILVEKISDNNELIGRSYNFAPEIDGTVILSVKDKIDLKNYIGKFVEANITFADEYDLYGEIIKIL</sequence>
<name>RIMO_PROMS</name>
<dbReference type="EC" id="2.8.4.4" evidence="1"/>
<dbReference type="EMBL" id="CP000551">
    <property type="protein sequence ID" value="ABM69406.1"/>
    <property type="molecule type" value="Genomic_DNA"/>
</dbReference>
<dbReference type="RefSeq" id="WP_011817594.1">
    <property type="nucleotide sequence ID" value="NC_008816.1"/>
</dbReference>
<dbReference type="SMR" id="A2BNP5"/>
<dbReference type="STRING" id="146891.A9601_01181"/>
<dbReference type="KEGG" id="pmb:A9601_01181"/>
<dbReference type="eggNOG" id="COG0621">
    <property type="taxonomic scope" value="Bacteria"/>
</dbReference>
<dbReference type="HOGENOM" id="CLU_018697_0_0_3"/>
<dbReference type="OrthoDB" id="9805215at2"/>
<dbReference type="Proteomes" id="UP000002590">
    <property type="component" value="Chromosome"/>
</dbReference>
<dbReference type="GO" id="GO:0005829">
    <property type="term" value="C:cytosol"/>
    <property type="evidence" value="ECO:0007669"/>
    <property type="project" value="TreeGrafter"/>
</dbReference>
<dbReference type="GO" id="GO:0051539">
    <property type="term" value="F:4 iron, 4 sulfur cluster binding"/>
    <property type="evidence" value="ECO:0007669"/>
    <property type="project" value="UniProtKB-UniRule"/>
</dbReference>
<dbReference type="GO" id="GO:0035599">
    <property type="term" value="F:aspartic acid methylthiotransferase activity"/>
    <property type="evidence" value="ECO:0007669"/>
    <property type="project" value="TreeGrafter"/>
</dbReference>
<dbReference type="GO" id="GO:0046872">
    <property type="term" value="F:metal ion binding"/>
    <property type="evidence" value="ECO:0007669"/>
    <property type="project" value="UniProtKB-KW"/>
</dbReference>
<dbReference type="GO" id="GO:0103039">
    <property type="term" value="F:protein methylthiotransferase activity"/>
    <property type="evidence" value="ECO:0007669"/>
    <property type="project" value="UniProtKB-EC"/>
</dbReference>
<dbReference type="GO" id="GO:0006400">
    <property type="term" value="P:tRNA modification"/>
    <property type="evidence" value="ECO:0007669"/>
    <property type="project" value="InterPro"/>
</dbReference>
<dbReference type="CDD" id="cd01335">
    <property type="entry name" value="Radical_SAM"/>
    <property type="match status" value="1"/>
</dbReference>
<dbReference type="FunFam" id="3.40.50.12160:FF:000003">
    <property type="entry name" value="CDK5 regulatory subunit-associated protein 1"/>
    <property type="match status" value="1"/>
</dbReference>
<dbReference type="FunFam" id="3.80.30.20:FF:000001">
    <property type="entry name" value="tRNA-2-methylthio-N(6)-dimethylallyladenosine synthase 2"/>
    <property type="match status" value="1"/>
</dbReference>
<dbReference type="Gene3D" id="3.40.50.12160">
    <property type="entry name" value="Methylthiotransferase, N-terminal domain"/>
    <property type="match status" value="1"/>
</dbReference>
<dbReference type="Gene3D" id="2.40.50.140">
    <property type="entry name" value="Nucleic acid-binding proteins"/>
    <property type="match status" value="1"/>
</dbReference>
<dbReference type="Gene3D" id="3.80.30.20">
    <property type="entry name" value="tm_1862 like domain"/>
    <property type="match status" value="1"/>
</dbReference>
<dbReference type="HAMAP" id="MF_01865">
    <property type="entry name" value="MTTase_RimO"/>
    <property type="match status" value="1"/>
</dbReference>
<dbReference type="InterPro" id="IPR006638">
    <property type="entry name" value="Elp3/MiaA/NifB-like_rSAM"/>
</dbReference>
<dbReference type="InterPro" id="IPR005839">
    <property type="entry name" value="Methylthiotransferase"/>
</dbReference>
<dbReference type="InterPro" id="IPR020612">
    <property type="entry name" value="Methylthiotransferase_CS"/>
</dbReference>
<dbReference type="InterPro" id="IPR013848">
    <property type="entry name" value="Methylthiotransferase_N"/>
</dbReference>
<dbReference type="InterPro" id="IPR038135">
    <property type="entry name" value="Methylthiotransferase_N_sf"/>
</dbReference>
<dbReference type="InterPro" id="IPR012340">
    <property type="entry name" value="NA-bd_OB-fold"/>
</dbReference>
<dbReference type="InterPro" id="IPR005840">
    <property type="entry name" value="Ribosomal_uS12_MeSTrfase_RimO"/>
</dbReference>
<dbReference type="InterPro" id="IPR007197">
    <property type="entry name" value="rSAM"/>
</dbReference>
<dbReference type="InterPro" id="IPR023404">
    <property type="entry name" value="rSAM_horseshoe"/>
</dbReference>
<dbReference type="InterPro" id="IPR002792">
    <property type="entry name" value="TRAM_dom"/>
</dbReference>
<dbReference type="NCBIfam" id="TIGR01125">
    <property type="entry name" value="30S ribosomal protein S12 methylthiotransferase RimO"/>
    <property type="match status" value="1"/>
</dbReference>
<dbReference type="NCBIfam" id="TIGR00089">
    <property type="entry name" value="MiaB/RimO family radical SAM methylthiotransferase"/>
    <property type="match status" value="1"/>
</dbReference>
<dbReference type="PANTHER" id="PTHR43837">
    <property type="entry name" value="RIBOSOMAL PROTEIN S12 METHYLTHIOTRANSFERASE RIMO"/>
    <property type="match status" value="1"/>
</dbReference>
<dbReference type="PANTHER" id="PTHR43837:SF1">
    <property type="entry name" value="RIBOSOMAL PROTEIN US12 METHYLTHIOTRANSFERASE RIMO"/>
    <property type="match status" value="1"/>
</dbReference>
<dbReference type="Pfam" id="PF04055">
    <property type="entry name" value="Radical_SAM"/>
    <property type="match status" value="1"/>
</dbReference>
<dbReference type="Pfam" id="PF18693">
    <property type="entry name" value="TRAM_2"/>
    <property type="match status" value="1"/>
</dbReference>
<dbReference type="Pfam" id="PF00919">
    <property type="entry name" value="UPF0004"/>
    <property type="match status" value="1"/>
</dbReference>
<dbReference type="SFLD" id="SFLDG01082">
    <property type="entry name" value="B12-binding_domain_containing"/>
    <property type="match status" value="1"/>
</dbReference>
<dbReference type="SFLD" id="SFLDS00029">
    <property type="entry name" value="Radical_SAM"/>
    <property type="match status" value="1"/>
</dbReference>
<dbReference type="SFLD" id="SFLDF00274">
    <property type="entry name" value="ribosomal_protein_S12_methylth"/>
    <property type="match status" value="1"/>
</dbReference>
<dbReference type="SMART" id="SM00729">
    <property type="entry name" value="Elp3"/>
    <property type="match status" value="1"/>
</dbReference>
<dbReference type="SUPFAM" id="SSF102114">
    <property type="entry name" value="Radical SAM enzymes"/>
    <property type="match status" value="1"/>
</dbReference>
<dbReference type="PROSITE" id="PS51449">
    <property type="entry name" value="MTTASE_N"/>
    <property type="match status" value="1"/>
</dbReference>
<dbReference type="PROSITE" id="PS01278">
    <property type="entry name" value="MTTASE_RADICAL"/>
    <property type="match status" value="1"/>
</dbReference>
<dbReference type="PROSITE" id="PS51918">
    <property type="entry name" value="RADICAL_SAM"/>
    <property type="match status" value="1"/>
</dbReference>
<dbReference type="PROSITE" id="PS50926">
    <property type="entry name" value="TRAM"/>
    <property type="match status" value="1"/>
</dbReference>
<gene>
    <name evidence="1" type="primary">rimO</name>
    <name type="ordered locus">A9601_01181</name>
</gene>
<accession>A2BNP5</accession>
<organism>
    <name type="scientific">Prochlorococcus marinus (strain AS9601)</name>
    <dbReference type="NCBI Taxonomy" id="146891"/>
    <lineage>
        <taxon>Bacteria</taxon>
        <taxon>Bacillati</taxon>
        <taxon>Cyanobacteriota</taxon>
        <taxon>Cyanophyceae</taxon>
        <taxon>Synechococcales</taxon>
        <taxon>Prochlorococcaceae</taxon>
        <taxon>Prochlorococcus</taxon>
    </lineage>
</organism>